<keyword id="KW-0963">Cytoplasm</keyword>
<keyword id="KW-0285">Flavoprotein</keyword>
<keyword id="KW-0288">FMN</keyword>
<keyword id="KW-0539">Nucleus</keyword>
<keyword id="KW-1185">Reference proteome</keyword>
<name>PDXH_SCHPO</name>
<evidence type="ECO:0000250" key="1"/>
<evidence type="ECO:0000269" key="2">
    <source>
    </source>
</evidence>
<evidence type="ECO:0000305" key="3"/>
<dbReference type="EMBL" id="CU329670">
    <property type="protein sequence ID" value="CAB52572.1"/>
    <property type="molecule type" value="Genomic_DNA"/>
</dbReference>
<dbReference type="PIR" id="T37936">
    <property type="entry name" value="T37936"/>
</dbReference>
<dbReference type="RefSeq" id="NP_594810.1">
    <property type="nucleotide sequence ID" value="NM_001020239.2"/>
</dbReference>
<dbReference type="SMR" id="Q9UUK0"/>
<dbReference type="BioGRID" id="279028">
    <property type="interactions" value="1"/>
</dbReference>
<dbReference type="FunCoup" id="Q9UUK0">
    <property type="interactions" value="17"/>
</dbReference>
<dbReference type="STRING" id="284812.Q9UUK0"/>
<dbReference type="iPTMnet" id="Q9UUK0"/>
<dbReference type="PaxDb" id="4896-SPAC1952.08c.1"/>
<dbReference type="EnsemblFungi" id="SPAC1952.08c.1">
    <property type="protein sequence ID" value="SPAC1952.08c.1:pep"/>
    <property type="gene ID" value="SPAC1952.08c"/>
</dbReference>
<dbReference type="KEGG" id="spo:2542572"/>
<dbReference type="PomBase" id="SPAC1952.08c"/>
<dbReference type="VEuPathDB" id="FungiDB:SPAC1952.08c"/>
<dbReference type="eggNOG" id="ENOG502S6QN">
    <property type="taxonomic scope" value="Eukaryota"/>
</dbReference>
<dbReference type="HOGENOM" id="CLU_078856_0_0_1"/>
<dbReference type="InParanoid" id="Q9UUK0"/>
<dbReference type="OMA" id="HDWISAN"/>
<dbReference type="PhylomeDB" id="Q9UUK0"/>
<dbReference type="PRO" id="PR:Q9UUK0"/>
<dbReference type="Proteomes" id="UP000002485">
    <property type="component" value="Chromosome I"/>
</dbReference>
<dbReference type="GO" id="GO:0005829">
    <property type="term" value="C:cytosol"/>
    <property type="evidence" value="ECO:0007005"/>
    <property type="project" value="PomBase"/>
</dbReference>
<dbReference type="GO" id="GO:0005634">
    <property type="term" value="C:nucleus"/>
    <property type="evidence" value="ECO:0007005"/>
    <property type="project" value="PomBase"/>
</dbReference>
<dbReference type="Gene3D" id="2.30.110.10">
    <property type="entry name" value="Electron Transport, Fmn-binding Protein, Chain A"/>
    <property type="match status" value="1"/>
</dbReference>
<dbReference type="InterPro" id="IPR052841">
    <property type="entry name" value="PMP_oxidase-like"/>
</dbReference>
<dbReference type="InterPro" id="IPR011576">
    <property type="entry name" value="Pyridox_Oxase_N"/>
</dbReference>
<dbReference type="InterPro" id="IPR012349">
    <property type="entry name" value="Split_barrel_FMN-bd"/>
</dbReference>
<dbReference type="PANTHER" id="PTHR28040">
    <property type="entry name" value="PYRIDOXAMINE 5'-PHOSPHATE OXIDASE YLR456W HOMOLOG-RELATED"/>
    <property type="match status" value="1"/>
</dbReference>
<dbReference type="PANTHER" id="PTHR28040:SF1">
    <property type="entry name" value="PYRIDOXAMINE 5'-PHOSPHATE OXIDASE YLR456W HOMOLOG-RELATED"/>
    <property type="match status" value="1"/>
</dbReference>
<dbReference type="Pfam" id="PF01243">
    <property type="entry name" value="PNPOx_N"/>
    <property type="match status" value="1"/>
</dbReference>
<dbReference type="SUPFAM" id="SSF50475">
    <property type="entry name" value="FMN-binding split barrel"/>
    <property type="match status" value="1"/>
</dbReference>
<organism>
    <name type="scientific">Schizosaccharomyces pombe (strain 972 / ATCC 24843)</name>
    <name type="common">Fission yeast</name>
    <dbReference type="NCBI Taxonomy" id="284812"/>
    <lineage>
        <taxon>Eukaryota</taxon>
        <taxon>Fungi</taxon>
        <taxon>Dikarya</taxon>
        <taxon>Ascomycota</taxon>
        <taxon>Taphrinomycotina</taxon>
        <taxon>Schizosaccharomycetes</taxon>
        <taxon>Schizosaccharomycetales</taxon>
        <taxon>Schizosaccharomycetaceae</taxon>
        <taxon>Schizosaccharomyces</taxon>
    </lineage>
</organism>
<proteinExistence type="inferred from homology"/>
<sequence>MASKVDSSHEFPSQIKRCLSSSKYIQLATCFHDQPHSSLMTFTYLPAGSAAPYEVEDCIILSTGENSKKYFNISSNPRVSLLVHDWTTNRQETDPDASSLYTLLYKMNQAQFSNTSVTLNGLATVLPKNSKEEEFFREKHLNTNDKGNTKQYVEGEDMRIIKIKLESARICDQRLNNVQKWNARGDETPF</sequence>
<gene>
    <name type="ORF">SPAC1952.08c</name>
</gene>
<comment type="cofactor">
    <cofactor evidence="1">
        <name>FMN</name>
        <dbReference type="ChEBI" id="CHEBI:58210"/>
    </cofactor>
    <text evidence="1">Binds 1 FMN per subunit.</text>
</comment>
<comment type="subcellular location">
    <subcellularLocation>
        <location evidence="2">Cytoplasm</location>
    </subcellularLocation>
    <subcellularLocation>
        <location evidence="2">Nucleus</location>
    </subcellularLocation>
</comment>
<comment type="similarity">
    <text evidence="3">Belongs to the pyridoxamine 5'-phosphate oxidase family.</text>
</comment>
<feature type="chain" id="PRO_0000315948" description="Pyridoxamine 5'-phosphate oxidase C1952.08c homolog">
    <location>
        <begin position="1"/>
        <end position="190"/>
    </location>
</feature>
<feature type="binding site" evidence="1">
    <location>
        <position position="62"/>
    </location>
    <ligand>
        <name>FMN</name>
        <dbReference type="ChEBI" id="CHEBI:58210"/>
    </ligand>
</feature>
<feature type="binding site" evidence="1">
    <location>
        <position position="69"/>
    </location>
    <ligand>
        <name>FMN</name>
        <dbReference type="ChEBI" id="CHEBI:58210"/>
    </ligand>
</feature>
<accession>Q9UUK0</accession>
<protein>
    <recommendedName>
        <fullName>Pyridoxamine 5'-phosphate oxidase C1952.08c homolog</fullName>
    </recommendedName>
    <alternativeName>
        <fullName>PNP/PMP oxidase C1952.08c homolog</fullName>
        <shortName>PNPOx C1952.08c homolog</shortName>
    </alternativeName>
</protein>
<reference key="1">
    <citation type="journal article" date="2002" name="Nature">
        <title>The genome sequence of Schizosaccharomyces pombe.</title>
        <authorList>
            <person name="Wood V."/>
            <person name="Gwilliam R."/>
            <person name="Rajandream M.A."/>
            <person name="Lyne M.H."/>
            <person name="Lyne R."/>
            <person name="Stewart A."/>
            <person name="Sgouros J.G."/>
            <person name="Peat N."/>
            <person name="Hayles J."/>
            <person name="Baker S.G."/>
            <person name="Basham D."/>
            <person name="Bowman S."/>
            <person name="Brooks K."/>
            <person name="Brown D."/>
            <person name="Brown S."/>
            <person name="Chillingworth T."/>
            <person name="Churcher C.M."/>
            <person name="Collins M."/>
            <person name="Connor R."/>
            <person name="Cronin A."/>
            <person name="Davis P."/>
            <person name="Feltwell T."/>
            <person name="Fraser A."/>
            <person name="Gentles S."/>
            <person name="Goble A."/>
            <person name="Hamlin N."/>
            <person name="Harris D.E."/>
            <person name="Hidalgo J."/>
            <person name="Hodgson G."/>
            <person name="Holroyd S."/>
            <person name="Hornsby T."/>
            <person name="Howarth S."/>
            <person name="Huckle E.J."/>
            <person name="Hunt S."/>
            <person name="Jagels K."/>
            <person name="James K.D."/>
            <person name="Jones L."/>
            <person name="Jones M."/>
            <person name="Leather S."/>
            <person name="McDonald S."/>
            <person name="McLean J."/>
            <person name="Mooney P."/>
            <person name="Moule S."/>
            <person name="Mungall K.L."/>
            <person name="Murphy L.D."/>
            <person name="Niblett D."/>
            <person name="Odell C."/>
            <person name="Oliver K."/>
            <person name="O'Neil S."/>
            <person name="Pearson D."/>
            <person name="Quail M.A."/>
            <person name="Rabbinowitsch E."/>
            <person name="Rutherford K.M."/>
            <person name="Rutter S."/>
            <person name="Saunders D."/>
            <person name="Seeger K."/>
            <person name="Sharp S."/>
            <person name="Skelton J."/>
            <person name="Simmonds M.N."/>
            <person name="Squares R."/>
            <person name="Squares S."/>
            <person name="Stevens K."/>
            <person name="Taylor K."/>
            <person name="Taylor R.G."/>
            <person name="Tivey A."/>
            <person name="Walsh S.V."/>
            <person name="Warren T."/>
            <person name="Whitehead S."/>
            <person name="Woodward J.R."/>
            <person name="Volckaert G."/>
            <person name="Aert R."/>
            <person name="Robben J."/>
            <person name="Grymonprez B."/>
            <person name="Weltjens I."/>
            <person name="Vanstreels E."/>
            <person name="Rieger M."/>
            <person name="Schaefer M."/>
            <person name="Mueller-Auer S."/>
            <person name="Gabel C."/>
            <person name="Fuchs M."/>
            <person name="Duesterhoeft A."/>
            <person name="Fritzc C."/>
            <person name="Holzer E."/>
            <person name="Moestl D."/>
            <person name="Hilbert H."/>
            <person name="Borzym K."/>
            <person name="Langer I."/>
            <person name="Beck A."/>
            <person name="Lehrach H."/>
            <person name="Reinhardt R."/>
            <person name="Pohl T.M."/>
            <person name="Eger P."/>
            <person name="Zimmermann W."/>
            <person name="Wedler H."/>
            <person name="Wambutt R."/>
            <person name="Purnelle B."/>
            <person name="Goffeau A."/>
            <person name="Cadieu E."/>
            <person name="Dreano S."/>
            <person name="Gloux S."/>
            <person name="Lelaure V."/>
            <person name="Mottier S."/>
            <person name="Galibert F."/>
            <person name="Aves S.J."/>
            <person name="Xiang Z."/>
            <person name="Hunt C."/>
            <person name="Moore K."/>
            <person name="Hurst S.M."/>
            <person name="Lucas M."/>
            <person name="Rochet M."/>
            <person name="Gaillardin C."/>
            <person name="Tallada V.A."/>
            <person name="Garzon A."/>
            <person name="Thode G."/>
            <person name="Daga R.R."/>
            <person name="Cruzado L."/>
            <person name="Jimenez J."/>
            <person name="Sanchez M."/>
            <person name="del Rey F."/>
            <person name="Benito J."/>
            <person name="Dominguez A."/>
            <person name="Revuelta J.L."/>
            <person name="Moreno S."/>
            <person name="Armstrong J."/>
            <person name="Forsburg S.L."/>
            <person name="Cerutti L."/>
            <person name="Lowe T."/>
            <person name="McCombie W.R."/>
            <person name="Paulsen I."/>
            <person name="Potashkin J."/>
            <person name="Shpakovski G.V."/>
            <person name="Ussery D."/>
            <person name="Barrell B.G."/>
            <person name="Nurse P."/>
        </authorList>
    </citation>
    <scope>NUCLEOTIDE SEQUENCE [LARGE SCALE GENOMIC DNA]</scope>
    <source>
        <strain>972 / ATCC 24843</strain>
    </source>
</reference>
<reference key="2">
    <citation type="journal article" date="2006" name="Nat. Biotechnol.">
        <title>ORFeome cloning and global analysis of protein localization in the fission yeast Schizosaccharomyces pombe.</title>
        <authorList>
            <person name="Matsuyama A."/>
            <person name="Arai R."/>
            <person name="Yashiroda Y."/>
            <person name="Shirai A."/>
            <person name="Kamata A."/>
            <person name="Sekido S."/>
            <person name="Kobayashi Y."/>
            <person name="Hashimoto A."/>
            <person name="Hamamoto M."/>
            <person name="Hiraoka Y."/>
            <person name="Horinouchi S."/>
            <person name="Yoshida M."/>
        </authorList>
    </citation>
    <scope>SUBCELLULAR LOCATION [LARGE SCALE ANALYSIS]</scope>
</reference>